<name>BIOB_NEIG2</name>
<gene>
    <name evidence="1" type="primary">bioB</name>
    <name type="ordered locus">NGK_0996</name>
</gene>
<organism>
    <name type="scientific">Neisseria gonorrhoeae (strain NCCP11945)</name>
    <dbReference type="NCBI Taxonomy" id="521006"/>
    <lineage>
        <taxon>Bacteria</taxon>
        <taxon>Pseudomonadati</taxon>
        <taxon>Pseudomonadota</taxon>
        <taxon>Betaproteobacteria</taxon>
        <taxon>Neisseriales</taxon>
        <taxon>Neisseriaceae</taxon>
        <taxon>Neisseria</taxon>
    </lineage>
</organism>
<comment type="function">
    <text evidence="1">Catalyzes the conversion of dethiobiotin (DTB) to biotin by the insertion of a sulfur atom into dethiobiotin via a radical-based mechanism.</text>
</comment>
<comment type="catalytic activity">
    <reaction evidence="1">
        <text>(4R,5S)-dethiobiotin + (sulfur carrier)-SH + 2 reduced [2Fe-2S]-[ferredoxin] + 2 S-adenosyl-L-methionine = (sulfur carrier)-H + biotin + 2 5'-deoxyadenosine + 2 L-methionine + 2 oxidized [2Fe-2S]-[ferredoxin]</text>
        <dbReference type="Rhea" id="RHEA:22060"/>
        <dbReference type="Rhea" id="RHEA-COMP:10000"/>
        <dbReference type="Rhea" id="RHEA-COMP:10001"/>
        <dbReference type="Rhea" id="RHEA-COMP:14737"/>
        <dbReference type="Rhea" id="RHEA-COMP:14739"/>
        <dbReference type="ChEBI" id="CHEBI:17319"/>
        <dbReference type="ChEBI" id="CHEBI:29917"/>
        <dbReference type="ChEBI" id="CHEBI:33737"/>
        <dbReference type="ChEBI" id="CHEBI:33738"/>
        <dbReference type="ChEBI" id="CHEBI:57586"/>
        <dbReference type="ChEBI" id="CHEBI:57844"/>
        <dbReference type="ChEBI" id="CHEBI:59789"/>
        <dbReference type="ChEBI" id="CHEBI:64428"/>
        <dbReference type="ChEBI" id="CHEBI:149473"/>
        <dbReference type="EC" id="2.8.1.6"/>
    </reaction>
</comment>
<comment type="cofactor">
    <cofactor evidence="1">
        <name>[4Fe-4S] cluster</name>
        <dbReference type="ChEBI" id="CHEBI:49883"/>
    </cofactor>
    <text evidence="1">Binds 1 [4Fe-4S] cluster. The cluster is coordinated with 3 cysteines and an exchangeable S-adenosyl-L-methionine.</text>
</comment>
<comment type="cofactor">
    <cofactor evidence="1">
        <name>[2Fe-2S] cluster</name>
        <dbReference type="ChEBI" id="CHEBI:190135"/>
    </cofactor>
    <text evidence="1">Binds 1 [2Fe-2S] cluster. The cluster is coordinated with 3 cysteines and 1 arginine.</text>
</comment>
<comment type="pathway">
    <text evidence="1">Cofactor biosynthesis; biotin biosynthesis; biotin from 7,8-diaminononanoate: step 2/2.</text>
</comment>
<comment type="subunit">
    <text evidence="1">Homodimer.</text>
</comment>
<comment type="similarity">
    <text evidence="1">Belongs to the radical SAM superfamily. Biotin synthase family.</text>
</comment>
<comment type="sequence caution" evidence="3">
    <conflict type="erroneous initiation">
        <sequence resource="EMBL-CDS" id="ACF29673"/>
    </conflict>
</comment>
<keyword id="KW-0001">2Fe-2S</keyword>
<keyword id="KW-0004">4Fe-4S</keyword>
<keyword id="KW-0093">Biotin biosynthesis</keyword>
<keyword id="KW-0408">Iron</keyword>
<keyword id="KW-0411">Iron-sulfur</keyword>
<keyword id="KW-0479">Metal-binding</keyword>
<keyword id="KW-0949">S-adenosyl-L-methionine</keyword>
<keyword id="KW-0808">Transferase</keyword>
<proteinExistence type="inferred from homology"/>
<protein>
    <recommendedName>
        <fullName evidence="1">Biotin synthase</fullName>
        <ecNumber evidence="1">2.8.1.6</ecNumber>
    </recommendedName>
</protein>
<sequence length="350" mass="38781">MTVSPVALRRKTECKPHPTARYWKKCDVEALFGLPFLELVYQAAEVHRQNFNPREIQLSTLLSIKTGGCPEDCAYCPQSAHHNTNLGKEQMMDVDEIVEKAKIAKSRGASRFCMGAAWRGPKPKDVETVSAIIKAVKGLGMETCGTFGMLEEGMAEDLKEAGLDYYNHNLDTDPDRYNDIIHTRRHEDRMDTLGKVRNAGLKVCCGGIVGMNETRAERAGLIASLANLDPQPESVPINRLVKVEGTPLADAEDLDWTEFVRTVSVARITMPQSYVRLSAGRSNMPEAMQAMCFMAGANSIFYGDKLLTTGNPDEDGDRILMEKLNLYPLQFEPEGEVAEVEKASGIKADY</sequence>
<feature type="chain" id="PRO_0000381494" description="Biotin synthase">
    <location>
        <begin position="1"/>
        <end position="350"/>
    </location>
</feature>
<feature type="domain" description="Radical SAM core" evidence="2">
    <location>
        <begin position="54"/>
        <end position="278"/>
    </location>
</feature>
<feature type="binding site" evidence="1">
    <location>
        <position position="69"/>
    </location>
    <ligand>
        <name>[4Fe-4S] cluster</name>
        <dbReference type="ChEBI" id="CHEBI:49883"/>
        <note>4Fe-4S-S-AdoMet</note>
    </ligand>
</feature>
<feature type="binding site" evidence="1">
    <location>
        <position position="73"/>
    </location>
    <ligand>
        <name>[4Fe-4S] cluster</name>
        <dbReference type="ChEBI" id="CHEBI:49883"/>
        <note>4Fe-4S-S-AdoMet</note>
    </ligand>
</feature>
<feature type="binding site" evidence="1">
    <location>
        <position position="76"/>
    </location>
    <ligand>
        <name>[4Fe-4S] cluster</name>
        <dbReference type="ChEBI" id="CHEBI:49883"/>
        <note>4Fe-4S-S-AdoMet</note>
    </ligand>
</feature>
<feature type="binding site" evidence="1">
    <location>
        <position position="113"/>
    </location>
    <ligand>
        <name>[2Fe-2S] cluster</name>
        <dbReference type="ChEBI" id="CHEBI:190135"/>
    </ligand>
</feature>
<feature type="binding site" evidence="1">
    <location>
        <position position="144"/>
    </location>
    <ligand>
        <name>[2Fe-2S] cluster</name>
        <dbReference type="ChEBI" id="CHEBI:190135"/>
    </ligand>
</feature>
<feature type="binding site" evidence="1">
    <location>
        <position position="204"/>
    </location>
    <ligand>
        <name>[2Fe-2S] cluster</name>
        <dbReference type="ChEBI" id="CHEBI:190135"/>
    </ligand>
</feature>
<feature type="binding site" evidence="1">
    <location>
        <position position="276"/>
    </location>
    <ligand>
        <name>[2Fe-2S] cluster</name>
        <dbReference type="ChEBI" id="CHEBI:190135"/>
    </ligand>
</feature>
<reference key="1">
    <citation type="journal article" date="2008" name="J. Bacteriol.">
        <title>Complete genome sequence of Neisseria gonorrhoeae NCCP11945.</title>
        <authorList>
            <person name="Chung G.T."/>
            <person name="Yoo J.S."/>
            <person name="Oh H.B."/>
            <person name="Lee Y.S."/>
            <person name="Cha S.H."/>
            <person name="Kim S.J."/>
            <person name="Yoo C.K."/>
        </authorList>
    </citation>
    <scope>NUCLEOTIDE SEQUENCE [LARGE SCALE GENOMIC DNA]</scope>
    <source>
        <strain>NCCP11945</strain>
    </source>
</reference>
<evidence type="ECO:0000255" key="1">
    <source>
        <dbReference type="HAMAP-Rule" id="MF_01694"/>
    </source>
</evidence>
<evidence type="ECO:0000255" key="2">
    <source>
        <dbReference type="PROSITE-ProRule" id="PRU01266"/>
    </source>
</evidence>
<evidence type="ECO:0000305" key="3"/>
<dbReference type="EC" id="2.8.1.6" evidence="1"/>
<dbReference type="EMBL" id="CP001050">
    <property type="protein sequence ID" value="ACF29673.1"/>
    <property type="status" value="ALT_INIT"/>
    <property type="molecule type" value="Genomic_DNA"/>
</dbReference>
<dbReference type="RefSeq" id="WP_010358160.1">
    <property type="nucleotide sequence ID" value="NC_011035.1"/>
</dbReference>
<dbReference type="SMR" id="B4RLI6"/>
<dbReference type="GeneID" id="66753150"/>
<dbReference type="KEGG" id="ngk:NGK_0996"/>
<dbReference type="HOGENOM" id="CLU_033172_1_2_4"/>
<dbReference type="UniPathway" id="UPA00078">
    <property type="reaction ID" value="UER00162"/>
</dbReference>
<dbReference type="Proteomes" id="UP000002564">
    <property type="component" value="Chromosome"/>
</dbReference>
<dbReference type="GO" id="GO:0051537">
    <property type="term" value="F:2 iron, 2 sulfur cluster binding"/>
    <property type="evidence" value="ECO:0007669"/>
    <property type="project" value="UniProtKB-KW"/>
</dbReference>
<dbReference type="GO" id="GO:0051539">
    <property type="term" value="F:4 iron, 4 sulfur cluster binding"/>
    <property type="evidence" value="ECO:0007669"/>
    <property type="project" value="UniProtKB-KW"/>
</dbReference>
<dbReference type="GO" id="GO:0004076">
    <property type="term" value="F:biotin synthase activity"/>
    <property type="evidence" value="ECO:0007669"/>
    <property type="project" value="UniProtKB-UniRule"/>
</dbReference>
<dbReference type="GO" id="GO:0005506">
    <property type="term" value="F:iron ion binding"/>
    <property type="evidence" value="ECO:0007669"/>
    <property type="project" value="UniProtKB-UniRule"/>
</dbReference>
<dbReference type="GO" id="GO:0009102">
    <property type="term" value="P:biotin biosynthetic process"/>
    <property type="evidence" value="ECO:0007669"/>
    <property type="project" value="UniProtKB-UniRule"/>
</dbReference>
<dbReference type="CDD" id="cd01335">
    <property type="entry name" value="Radical_SAM"/>
    <property type="match status" value="1"/>
</dbReference>
<dbReference type="FunFam" id="3.20.20.70:FF:000011">
    <property type="entry name" value="Biotin synthase"/>
    <property type="match status" value="1"/>
</dbReference>
<dbReference type="Gene3D" id="3.20.20.70">
    <property type="entry name" value="Aldolase class I"/>
    <property type="match status" value="1"/>
</dbReference>
<dbReference type="HAMAP" id="MF_01694">
    <property type="entry name" value="BioB"/>
    <property type="match status" value="1"/>
</dbReference>
<dbReference type="InterPro" id="IPR013785">
    <property type="entry name" value="Aldolase_TIM"/>
</dbReference>
<dbReference type="InterPro" id="IPR010722">
    <property type="entry name" value="BATS_dom"/>
</dbReference>
<dbReference type="InterPro" id="IPR002684">
    <property type="entry name" value="Biotin_synth/BioAB"/>
</dbReference>
<dbReference type="InterPro" id="IPR024177">
    <property type="entry name" value="Biotin_synthase"/>
</dbReference>
<dbReference type="InterPro" id="IPR006638">
    <property type="entry name" value="Elp3/MiaA/NifB-like_rSAM"/>
</dbReference>
<dbReference type="InterPro" id="IPR007197">
    <property type="entry name" value="rSAM"/>
</dbReference>
<dbReference type="NCBIfam" id="TIGR00433">
    <property type="entry name" value="bioB"/>
    <property type="match status" value="1"/>
</dbReference>
<dbReference type="PANTHER" id="PTHR22976">
    <property type="entry name" value="BIOTIN SYNTHASE"/>
    <property type="match status" value="1"/>
</dbReference>
<dbReference type="PANTHER" id="PTHR22976:SF2">
    <property type="entry name" value="BIOTIN SYNTHASE, MITOCHONDRIAL"/>
    <property type="match status" value="1"/>
</dbReference>
<dbReference type="Pfam" id="PF06968">
    <property type="entry name" value="BATS"/>
    <property type="match status" value="1"/>
</dbReference>
<dbReference type="Pfam" id="PF04055">
    <property type="entry name" value="Radical_SAM"/>
    <property type="match status" value="1"/>
</dbReference>
<dbReference type="PIRSF" id="PIRSF001619">
    <property type="entry name" value="Biotin_synth"/>
    <property type="match status" value="1"/>
</dbReference>
<dbReference type="SFLD" id="SFLDF00272">
    <property type="entry name" value="biotin_synthase"/>
    <property type="match status" value="1"/>
</dbReference>
<dbReference type="SFLD" id="SFLDG01278">
    <property type="entry name" value="biotin_synthase_like"/>
    <property type="match status" value="1"/>
</dbReference>
<dbReference type="SMART" id="SM00876">
    <property type="entry name" value="BATS"/>
    <property type="match status" value="1"/>
</dbReference>
<dbReference type="SMART" id="SM00729">
    <property type="entry name" value="Elp3"/>
    <property type="match status" value="1"/>
</dbReference>
<dbReference type="SUPFAM" id="SSF102114">
    <property type="entry name" value="Radical SAM enzymes"/>
    <property type="match status" value="1"/>
</dbReference>
<dbReference type="PROSITE" id="PS51918">
    <property type="entry name" value="RADICAL_SAM"/>
    <property type="match status" value="1"/>
</dbReference>
<accession>B4RLI6</accession>